<proteinExistence type="inferred from homology"/>
<evidence type="ECO:0000255" key="1">
    <source>
        <dbReference type="HAMAP-Rule" id="MF_00082"/>
    </source>
</evidence>
<feature type="chain" id="PRO_0000112585" description="Acetylglutamate kinase">
    <location>
        <begin position="1"/>
        <end position="257"/>
    </location>
</feature>
<feature type="binding site" evidence="1">
    <location>
        <begin position="40"/>
        <end position="41"/>
    </location>
    <ligand>
        <name>substrate</name>
    </ligand>
</feature>
<feature type="binding site" evidence="1">
    <location>
        <position position="62"/>
    </location>
    <ligand>
        <name>substrate</name>
    </ligand>
</feature>
<feature type="binding site" evidence="1">
    <location>
        <position position="155"/>
    </location>
    <ligand>
        <name>substrate</name>
    </ligand>
</feature>
<feature type="site" description="Transition state stabilizer" evidence="1">
    <location>
        <position position="7"/>
    </location>
</feature>
<feature type="site" description="Transition state stabilizer" evidence="1">
    <location>
        <position position="214"/>
    </location>
</feature>
<keyword id="KW-0028">Amino-acid biosynthesis</keyword>
<keyword id="KW-0055">Arginine biosynthesis</keyword>
<keyword id="KW-0067">ATP-binding</keyword>
<keyword id="KW-0963">Cytoplasm</keyword>
<keyword id="KW-0418">Kinase</keyword>
<keyword id="KW-0547">Nucleotide-binding</keyword>
<keyword id="KW-1185">Reference proteome</keyword>
<keyword id="KW-0808">Transferase</keyword>
<comment type="function">
    <text evidence="1">Catalyzes the ATP-dependent phosphorylation of N-acetyl-L-glutamate.</text>
</comment>
<comment type="catalytic activity">
    <reaction evidence="1">
        <text>N-acetyl-L-glutamate + ATP = N-acetyl-L-glutamyl 5-phosphate + ADP</text>
        <dbReference type="Rhea" id="RHEA:14629"/>
        <dbReference type="ChEBI" id="CHEBI:30616"/>
        <dbReference type="ChEBI" id="CHEBI:44337"/>
        <dbReference type="ChEBI" id="CHEBI:57936"/>
        <dbReference type="ChEBI" id="CHEBI:456216"/>
        <dbReference type="EC" id="2.7.2.8"/>
    </reaction>
</comment>
<comment type="pathway">
    <text evidence="1">Amino-acid biosynthesis; L-arginine biosynthesis; N(2)-acetyl-L-ornithine from L-glutamate: step 2/4.</text>
</comment>
<comment type="subcellular location">
    <subcellularLocation>
        <location evidence="1">Cytoplasm</location>
    </subcellularLocation>
</comment>
<comment type="similarity">
    <text evidence="1">Belongs to the acetylglutamate kinase family. ArgB subfamily.</text>
</comment>
<sequence>MATVVIKIGGSTLEALEEGFYEGVVKRASLGDKIMIVHGGGPAINNLLQAMAVESQFVNGLRKTTAEVLTAAETALSGQINKQLVRSLYQAGGKAIGLSGSDGHLLKTIPIDTDKLGFVGAVESVNVDVLFNVAKAGYIPVIAPIGMDANYQPYNINADTAAAAVAKASKAEELVFVTDVDGVQKDGKVIKEMDEVLAKHYIEEGVIYGGMVPKVNACLDSLSGALTKARIVNGKKAYHPSAGTAIVKQSNVLTSGA</sequence>
<name>ARGB_SHOC1</name>
<gene>
    <name evidence="1" type="primary">argB</name>
    <name type="ordered locus">ABC2556</name>
</gene>
<accession>Q5WEW9</accession>
<dbReference type="EC" id="2.7.2.8" evidence="1"/>
<dbReference type="EMBL" id="AP006627">
    <property type="protein sequence ID" value="BAD65091.1"/>
    <property type="molecule type" value="Genomic_DNA"/>
</dbReference>
<dbReference type="SMR" id="Q5WEW9"/>
<dbReference type="STRING" id="66692.ABC2556"/>
<dbReference type="KEGG" id="bcl:ABC2556"/>
<dbReference type="eggNOG" id="COG0548">
    <property type="taxonomic scope" value="Bacteria"/>
</dbReference>
<dbReference type="HOGENOM" id="CLU_053680_1_0_9"/>
<dbReference type="OrthoDB" id="9803155at2"/>
<dbReference type="UniPathway" id="UPA00068">
    <property type="reaction ID" value="UER00107"/>
</dbReference>
<dbReference type="Proteomes" id="UP000001168">
    <property type="component" value="Chromosome"/>
</dbReference>
<dbReference type="GO" id="GO:0005737">
    <property type="term" value="C:cytoplasm"/>
    <property type="evidence" value="ECO:0007669"/>
    <property type="project" value="UniProtKB-SubCell"/>
</dbReference>
<dbReference type="GO" id="GO:0003991">
    <property type="term" value="F:acetylglutamate kinase activity"/>
    <property type="evidence" value="ECO:0007669"/>
    <property type="project" value="UniProtKB-UniRule"/>
</dbReference>
<dbReference type="GO" id="GO:0005524">
    <property type="term" value="F:ATP binding"/>
    <property type="evidence" value="ECO:0007669"/>
    <property type="project" value="UniProtKB-UniRule"/>
</dbReference>
<dbReference type="GO" id="GO:0042450">
    <property type="term" value="P:arginine biosynthetic process via ornithine"/>
    <property type="evidence" value="ECO:0007669"/>
    <property type="project" value="UniProtKB-UniRule"/>
</dbReference>
<dbReference type="GO" id="GO:0006526">
    <property type="term" value="P:L-arginine biosynthetic process"/>
    <property type="evidence" value="ECO:0007669"/>
    <property type="project" value="UniProtKB-UniPathway"/>
</dbReference>
<dbReference type="CDD" id="cd04238">
    <property type="entry name" value="AAK_NAGK-like"/>
    <property type="match status" value="1"/>
</dbReference>
<dbReference type="FunFam" id="3.40.1160.10:FF:000004">
    <property type="entry name" value="Acetylglutamate kinase"/>
    <property type="match status" value="1"/>
</dbReference>
<dbReference type="Gene3D" id="3.40.1160.10">
    <property type="entry name" value="Acetylglutamate kinase-like"/>
    <property type="match status" value="1"/>
</dbReference>
<dbReference type="HAMAP" id="MF_00082">
    <property type="entry name" value="ArgB"/>
    <property type="match status" value="1"/>
</dbReference>
<dbReference type="InterPro" id="IPR036393">
    <property type="entry name" value="AceGlu_kinase-like_sf"/>
</dbReference>
<dbReference type="InterPro" id="IPR004662">
    <property type="entry name" value="AcgluKinase_fam"/>
</dbReference>
<dbReference type="InterPro" id="IPR037528">
    <property type="entry name" value="ArgB"/>
</dbReference>
<dbReference type="InterPro" id="IPR001048">
    <property type="entry name" value="Asp/Glu/Uridylate_kinase"/>
</dbReference>
<dbReference type="InterPro" id="IPR001057">
    <property type="entry name" value="Glu/AcGlu_kinase"/>
</dbReference>
<dbReference type="NCBIfam" id="TIGR00761">
    <property type="entry name" value="argB"/>
    <property type="match status" value="1"/>
</dbReference>
<dbReference type="PANTHER" id="PTHR23342">
    <property type="entry name" value="N-ACETYLGLUTAMATE SYNTHASE"/>
    <property type="match status" value="1"/>
</dbReference>
<dbReference type="PANTHER" id="PTHR23342:SF0">
    <property type="entry name" value="N-ACETYLGLUTAMATE SYNTHASE, MITOCHONDRIAL"/>
    <property type="match status" value="1"/>
</dbReference>
<dbReference type="Pfam" id="PF00696">
    <property type="entry name" value="AA_kinase"/>
    <property type="match status" value="1"/>
</dbReference>
<dbReference type="PIRSF" id="PIRSF000728">
    <property type="entry name" value="NAGK"/>
    <property type="match status" value="1"/>
</dbReference>
<dbReference type="PRINTS" id="PR00474">
    <property type="entry name" value="GLU5KINASE"/>
</dbReference>
<dbReference type="SUPFAM" id="SSF53633">
    <property type="entry name" value="Carbamate kinase-like"/>
    <property type="match status" value="1"/>
</dbReference>
<protein>
    <recommendedName>
        <fullName evidence="1">Acetylglutamate kinase</fullName>
        <ecNumber evidence="1">2.7.2.8</ecNumber>
    </recommendedName>
    <alternativeName>
        <fullName evidence="1">N-acetyl-L-glutamate 5-phosphotransferase</fullName>
    </alternativeName>
    <alternativeName>
        <fullName evidence="1">NAG kinase</fullName>
        <shortName evidence="1">NAGK</shortName>
    </alternativeName>
</protein>
<reference key="1">
    <citation type="submission" date="2003-10" db="EMBL/GenBank/DDBJ databases">
        <title>The complete genome sequence of the alkaliphilic Bacillus clausii KSM-K16.</title>
        <authorList>
            <person name="Takaki Y."/>
            <person name="Kageyama Y."/>
            <person name="Shimamura S."/>
            <person name="Suzuki H."/>
            <person name="Nishi S."/>
            <person name="Hatada Y."/>
            <person name="Kawai S."/>
            <person name="Ito S."/>
            <person name="Horikoshi K."/>
        </authorList>
    </citation>
    <scope>NUCLEOTIDE SEQUENCE [LARGE SCALE GENOMIC DNA]</scope>
    <source>
        <strain>KSM-K16</strain>
    </source>
</reference>
<organism>
    <name type="scientific">Shouchella clausii (strain KSM-K16)</name>
    <name type="common">Alkalihalobacillus clausii</name>
    <dbReference type="NCBI Taxonomy" id="66692"/>
    <lineage>
        <taxon>Bacteria</taxon>
        <taxon>Bacillati</taxon>
        <taxon>Bacillota</taxon>
        <taxon>Bacilli</taxon>
        <taxon>Bacillales</taxon>
        <taxon>Bacillaceae</taxon>
        <taxon>Shouchella</taxon>
    </lineage>
</organism>